<evidence type="ECO:0000250" key="1"/>
<evidence type="ECO:0000250" key="2">
    <source>
        <dbReference type="UniProtKB" id="P02510"/>
    </source>
</evidence>
<evidence type="ECO:0000250" key="3">
    <source>
        <dbReference type="UniProtKB" id="P02511"/>
    </source>
</evidence>
<evidence type="ECO:0000250" key="4">
    <source>
        <dbReference type="UniProtKB" id="P23927"/>
    </source>
</evidence>
<evidence type="ECO:0000250" key="5">
    <source>
        <dbReference type="UniProtKB" id="P23928"/>
    </source>
</evidence>
<evidence type="ECO:0000255" key="6">
    <source>
        <dbReference type="PROSITE-ProRule" id="PRU00285"/>
    </source>
</evidence>
<evidence type="ECO:0000256" key="7">
    <source>
        <dbReference type="SAM" id="MobiDB-lite"/>
    </source>
</evidence>
<comment type="function">
    <text evidence="4">May contribute to the transparency and refractive index of the lens. Has chaperone-like activity, preventing aggregation of various proteins under a wide range of stress conditions. In lens epithelial cells, stabilizes the ATP6V1A protein, preventing its degradation by the proteasome (By similarity).</text>
</comment>
<comment type="subunit">
    <text evidence="3 4">Heteromer composed of three CRYAA and one CRYAB subunits. Aggregates with homologous proteins, including the small heat shock protein HSPB1, to form large heteromeric complexes. Inter-subunit bridging via zinc ions enhances stability, which is crucial as there is no protein turn over in the lens. Interacts with HSPBAP1 and TTN/titin. Interacts with TMEM109; in the cellular response to DNA damage. Interacts with DES; binds rapidly during early stages of DES filament assembly and a reduced binding seen in the later stages. Interacts with TMED10; the interaction mediates the translocation from the cytoplasm into the ERGIC (endoplasmic reticulum-Golgi intermediate compartment) and thereby secretion. Interacts with ATP6V1A and with MTOR, forming a ternary complex (By similarity).</text>
</comment>
<comment type="subcellular location">
    <subcellularLocation>
        <location evidence="3">Cytoplasm</location>
    </subcellularLocation>
    <subcellularLocation>
        <location evidence="3">Nucleus</location>
    </subcellularLocation>
    <subcellularLocation>
        <location evidence="3">Secreted</location>
    </subcellularLocation>
    <subcellularLocation>
        <location evidence="4">Lysosome</location>
    </subcellularLocation>
    <text evidence="3">Translocates to the nucleus during heat shock and resides in sub-nuclear structures known as SC35 speckles or nuclear splicing speckles. Localizes at the Z-bands and the intercalated disk in cardiomyocytes. Can be secreted; the secretion is dependent on protein unfolding and facilitated by the cargo receptor TMED10; it results in protein translocation from the cytoplasm into the ERGIC (endoplasmic reticulum-Golgi intermediate compartment) followed by vesicle entry and secretion.</text>
</comment>
<comment type="similarity">
    <text evidence="6">Belongs to the small heat shock protein (HSP20) family.</text>
</comment>
<feature type="chain" id="PRO_0000252666" description="Alpha-crystallin B chain">
    <location>
        <begin position="1"/>
        <end position="175"/>
    </location>
</feature>
<feature type="domain" description="sHSP" evidence="6">
    <location>
        <begin position="56"/>
        <end position="164"/>
    </location>
</feature>
<feature type="region of interest" description="Disordered" evidence="7">
    <location>
        <begin position="142"/>
        <end position="175"/>
    </location>
</feature>
<feature type="binding site" evidence="1">
    <location>
        <position position="83"/>
    </location>
    <ligand>
        <name>Zn(2+)</name>
        <dbReference type="ChEBI" id="CHEBI:29105"/>
        <label>1</label>
    </ligand>
</feature>
<feature type="binding site" evidence="1">
    <location>
        <position position="104"/>
    </location>
    <ligand>
        <name>Zn(2+)</name>
        <dbReference type="ChEBI" id="CHEBI:29105"/>
        <label>2</label>
    </ligand>
</feature>
<feature type="binding site" evidence="1">
    <location>
        <position position="106"/>
    </location>
    <ligand>
        <name>Zn(2+)</name>
        <dbReference type="ChEBI" id="CHEBI:29105"/>
        <label>2</label>
    </ligand>
</feature>
<feature type="binding site" evidence="1">
    <location>
        <position position="111"/>
    </location>
    <ligand>
        <name>Zn(2+)</name>
        <dbReference type="ChEBI" id="CHEBI:29105"/>
        <label>1</label>
    </ligand>
</feature>
<feature type="binding site" evidence="1">
    <location>
        <position position="119"/>
    </location>
    <ligand>
        <name>Zn(2+)</name>
        <dbReference type="ChEBI" id="CHEBI:29105"/>
        <label>1</label>
    </ligand>
</feature>
<feature type="modified residue" description="N-acetylmethionine" evidence="2">
    <location>
        <position position="1"/>
    </location>
</feature>
<feature type="modified residue" description="Phosphoserine" evidence="2">
    <location>
        <position position="19"/>
    </location>
</feature>
<feature type="modified residue" description="Phosphoserine" evidence="2">
    <location>
        <position position="45"/>
    </location>
</feature>
<feature type="modified residue" description="Phosphoserine" evidence="2">
    <location>
        <position position="59"/>
    </location>
</feature>
<feature type="modified residue" description="N6-acetyllysine" evidence="3">
    <location>
        <position position="92"/>
    </location>
</feature>
<feature type="modified residue" description="N6-acetyllysine" evidence="3">
    <location>
        <position position="166"/>
    </location>
</feature>
<feature type="glycosylation site" description="O-linked (GlcNAc) serine" evidence="3">
    <location>
        <position position="41"/>
    </location>
</feature>
<feature type="glycosylation site" description="O-linked (GlcNAc) threonine" evidence="5">
    <location>
        <position position="170"/>
    </location>
</feature>
<accession>Q7M2W6</accession>
<gene>
    <name type="primary">CRYAB</name>
</gene>
<keyword id="KW-0007">Acetylation</keyword>
<keyword id="KW-0143">Chaperone</keyword>
<keyword id="KW-0963">Cytoplasm</keyword>
<keyword id="KW-0273">Eye lens protein</keyword>
<keyword id="KW-0325">Glycoprotein</keyword>
<keyword id="KW-0458">Lysosome</keyword>
<keyword id="KW-0479">Metal-binding</keyword>
<keyword id="KW-0488">Methylation</keyword>
<keyword id="KW-0539">Nucleus</keyword>
<keyword id="KW-0597">Phosphoprotein</keyword>
<keyword id="KW-1185">Reference proteome</keyword>
<keyword id="KW-0964">Secreted</keyword>
<keyword id="KW-0862">Zinc</keyword>
<reference key="1">
    <citation type="journal article" date="1998" name="Biochem. Biophys. Res. Commun.">
        <title>Characterization, cloning, and expression of porcine alpha B crystallin.</title>
        <authorList>
            <person name="Liao J.H."/>
            <person name="Hung C.C."/>
            <person name="Lee J.S."/>
            <person name="Wu S.H."/>
            <person name="Chiou S.H."/>
        </authorList>
    </citation>
    <scope>NUCLEOTIDE SEQUENCE [MRNA]</scope>
    <source>
        <tissue>Lens</tissue>
    </source>
</reference>
<name>CRYAB_PIG</name>
<proteinExistence type="evidence at transcript level"/>
<sequence length="175" mass="20129">MDIAIHHPWIRRPFFPFHSPSRLFDQFFGEHLLESDLFPASTSLSPFYFRPPSFLRAPSWIDTGLSEMRLEKDRFSVNLDVKHFSPEELKVKVLGDVIEVHGKHEERQDEHGFISREFHRKYRIPADVDPLTITSSLSSDGVLTVNGPRRQASGPERTIPITREEKPAVTAAPKK</sequence>
<dbReference type="PIR" id="JC5971">
    <property type="entry name" value="JC5971"/>
</dbReference>
<dbReference type="RefSeq" id="XP_005667376.1">
    <property type="nucleotide sequence ID" value="XM_005667319.2"/>
</dbReference>
<dbReference type="RefSeq" id="XP_005667377.1">
    <property type="nucleotide sequence ID" value="XM_005667320.2"/>
</dbReference>
<dbReference type="RefSeq" id="XP_020918437.1">
    <property type="nucleotide sequence ID" value="XM_021062778.1"/>
</dbReference>
<dbReference type="RefSeq" id="XP_020918438.1">
    <property type="nucleotide sequence ID" value="XM_021062779.1"/>
</dbReference>
<dbReference type="SMR" id="Q7M2W6"/>
<dbReference type="FunCoup" id="Q7M2W6">
    <property type="interactions" value="353"/>
</dbReference>
<dbReference type="STRING" id="9823.ENSSSCP00000047187"/>
<dbReference type="GlyCosmos" id="Q7M2W6">
    <property type="glycosylation" value="1 site, No reported glycans"/>
</dbReference>
<dbReference type="GlyGen" id="Q7M2W6">
    <property type="glycosylation" value="2 sites"/>
</dbReference>
<dbReference type="iPTMnet" id="Q7M2W6"/>
<dbReference type="PaxDb" id="9823-ENSSSCP00000015948"/>
<dbReference type="PeptideAtlas" id="Q7M2W6"/>
<dbReference type="Ensembl" id="ENSSSCT00000059078.3">
    <property type="protein sequence ID" value="ENSSSCP00000035382.1"/>
    <property type="gene ID" value="ENSSSCG00000036724.3"/>
</dbReference>
<dbReference type="Ensembl" id="ENSSSCT00025057887.1">
    <property type="protein sequence ID" value="ENSSSCP00025024495.1"/>
    <property type="gene ID" value="ENSSSCG00025042507.1"/>
</dbReference>
<dbReference type="Ensembl" id="ENSSSCT00030099319.1">
    <property type="protein sequence ID" value="ENSSSCP00030045709.1"/>
    <property type="gene ID" value="ENSSSCG00030070976.1"/>
</dbReference>
<dbReference type="Ensembl" id="ENSSSCT00035087364.1">
    <property type="protein sequence ID" value="ENSSSCP00035036474.1"/>
    <property type="gene ID" value="ENSSSCG00035064861.1"/>
</dbReference>
<dbReference type="Ensembl" id="ENSSSCT00040083229.1">
    <property type="protein sequence ID" value="ENSSSCP00040036260.1"/>
    <property type="gene ID" value="ENSSSCG00040060499.1"/>
</dbReference>
<dbReference type="Ensembl" id="ENSSSCT00050030881.1">
    <property type="protein sequence ID" value="ENSSSCP00050012877.1"/>
    <property type="gene ID" value="ENSSSCG00050022877.1"/>
</dbReference>
<dbReference type="Ensembl" id="ENSSSCT00055027724.1">
    <property type="protein sequence ID" value="ENSSSCP00055022074.1"/>
    <property type="gene ID" value="ENSSSCG00055014007.1"/>
</dbReference>
<dbReference type="Ensembl" id="ENSSSCT00060086556.1">
    <property type="protein sequence ID" value="ENSSSCP00060037435.1"/>
    <property type="gene ID" value="ENSSSCG00060063075.1"/>
</dbReference>
<dbReference type="Ensembl" id="ENSSSCT00070016677.1">
    <property type="protein sequence ID" value="ENSSSCP00070013824.1"/>
    <property type="gene ID" value="ENSSSCG00070008603.1"/>
</dbReference>
<dbReference type="Ensembl" id="ENSSSCT00110022991">
    <property type="protein sequence ID" value="ENSSSCP00110015637"/>
    <property type="gene ID" value="ENSSSCG00110011928"/>
</dbReference>
<dbReference type="Ensembl" id="ENSSSCT00115010174">
    <property type="protein sequence ID" value="ENSSSCP00115009576"/>
    <property type="gene ID" value="ENSSSCG00115005875"/>
</dbReference>
<dbReference type="GeneID" id="100519789"/>
<dbReference type="KEGG" id="ssc:100519789"/>
<dbReference type="CTD" id="1410"/>
<dbReference type="VGNC" id="VGNC:87013">
    <property type="gene designation" value="CRYAB"/>
</dbReference>
<dbReference type="eggNOG" id="KOG3591">
    <property type="taxonomic scope" value="Eukaryota"/>
</dbReference>
<dbReference type="GeneTree" id="ENSGT00940000157434"/>
<dbReference type="HOGENOM" id="CLU_095001_2_0_1"/>
<dbReference type="InParanoid" id="Q7M2W6"/>
<dbReference type="OrthoDB" id="1431247at2759"/>
<dbReference type="TreeFam" id="TF105049"/>
<dbReference type="Reactome" id="R-SSC-3371571">
    <property type="pathway name" value="HSF1-dependent transactivation"/>
</dbReference>
<dbReference type="Proteomes" id="UP000008227">
    <property type="component" value="Chromosome 9"/>
</dbReference>
<dbReference type="Proteomes" id="UP000314985">
    <property type="component" value="Chromosome 9"/>
</dbReference>
<dbReference type="Proteomes" id="UP000694570">
    <property type="component" value="Unplaced"/>
</dbReference>
<dbReference type="Proteomes" id="UP000694571">
    <property type="component" value="Unplaced"/>
</dbReference>
<dbReference type="Proteomes" id="UP000694720">
    <property type="component" value="Unplaced"/>
</dbReference>
<dbReference type="Proteomes" id="UP000694722">
    <property type="component" value="Unplaced"/>
</dbReference>
<dbReference type="Proteomes" id="UP000694723">
    <property type="component" value="Unplaced"/>
</dbReference>
<dbReference type="Proteomes" id="UP000694724">
    <property type="component" value="Unplaced"/>
</dbReference>
<dbReference type="Proteomes" id="UP000694725">
    <property type="component" value="Unplaced"/>
</dbReference>
<dbReference type="Proteomes" id="UP000694726">
    <property type="component" value="Unplaced"/>
</dbReference>
<dbReference type="Proteomes" id="UP000694727">
    <property type="component" value="Unplaced"/>
</dbReference>
<dbReference type="Proteomes" id="UP000694728">
    <property type="component" value="Unplaced"/>
</dbReference>
<dbReference type="Bgee" id="ENSSSCG00000036724">
    <property type="expression patterns" value="Expressed in psoas major muscle and 45 other cell types or tissues"/>
</dbReference>
<dbReference type="ExpressionAtlas" id="Q7M2W6">
    <property type="expression patterns" value="baseline and differential"/>
</dbReference>
<dbReference type="GO" id="GO:0005737">
    <property type="term" value="C:cytoplasm"/>
    <property type="evidence" value="ECO:0000250"/>
    <property type="project" value="UniProtKB"/>
</dbReference>
<dbReference type="GO" id="GO:0005576">
    <property type="term" value="C:extracellular region"/>
    <property type="evidence" value="ECO:0007669"/>
    <property type="project" value="UniProtKB-SubCell"/>
</dbReference>
<dbReference type="GO" id="GO:0005764">
    <property type="term" value="C:lysosome"/>
    <property type="evidence" value="ECO:0007669"/>
    <property type="project" value="UniProtKB-SubCell"/>
</dbReference>
<dbReference type="GO" id="GO:0005634">
    <property type="term" value="C:nucleus"/>
    <property type="evidence" value="ECO:0000250"/>
    <property type="project" value="UniProtKB"/>
</dbReference>
<dbReference type="GO" id="GO:0032991">
    <property type="term" value="C:protein-containing complex"/>
    <property type="evidence" value="ECO:0000250"/>
    <property type="project" value="UniProtKB"/>
</dbReference>
<dbReference type="GO" id="GO:0046872">
    <property type="term" value="F:metal ion binding"/>
    <property type="evidence" value="ECO:0007669"/>
    <property type="project" value="UniProtKB-KW"/>
</dbReference>
<dbReference type="GO" id="GO:0042803">
    <property type="term" value="F:protein homodimerization activity"/>
    <property type="evidence" value="ECO:0000250"/>
    <property type="project" value="UniProtKB"/>
</dbReference>
<dbReference type="GO" id="GO:0005212">
    <property type="term" value="F:structural constituent of eye lens"/>
    <property type="evidence" value="ECO:0007669"/>
    <property type="project" value="UniProtKB-KW"/>
</dbReference>
<dbReference type="GO" id="GO:0051082">
    <property type="term" value="F:unfolded protein binding"/>
    <property type="evidence" value="ECO:0000318"/>
    <property type="project" value="GO_Central"/>
</dbReference>
<dbReference type="GO" id="GO:0043066">
    <property type="term" value="P:negative regulation of apoptotic process"/>
    <property type="evidence" value="ECO:0000318"/>
    <property type="project" value="GO_Central"/>
</dbReference>
<dbReference type="GO" id="GO:0045892">
    <property type="term" value="P:negative regulation of DNA-templated transcription"/>
    <property type="evidence" value="ECO:0000250"/>
    <property type="project" value="UniProtKB"/>
</dbReference>
<dbReference type="GO" id="GO:0042026">
    <property type="term" value="P:protein refolding"/>
    <property type="evidence" value="ECO:0000318"/>
    <property type="project" value="GO_Central"/>
</dbReference>
<dbReference type="GO" id="GO:0009408">
    <property type="term" value="P:response to heat"/>
    <property type="evidence" value="ECO:0000318"/>
    <property type="project" value="GO_Central"/>
</dbReference>
<dbReference type="CDD" id="cd06498">
    <property type="entry name" value="ACD_alphaB-crystallin_HspB5"/>
    <property type="match status" value="1"/>
</dbReference>
<dbReference type="FunFam" id="2.60.40.790:FF:000011">
    <property type="entry name" value="Alpha-crystallin B chain"/>
    <property type="match status" value="1"/>
</dbReference>
<dbReference type="Gene3D" id="2.60.40.790">
    <property type="match status" value="1"/>
</dbReference>
<dbReference type="InterPro" id="IPR002068">
    <property type="entry name" value="A-crystallin/Hsp20_dom"/>
</dbReference>
<dbReference type="InterPro" id="IPR037882">
    <property type="entry name" value="ACD_alphaB-crystallin"/>
</dbReference>
<dbReference type="InterPro" id="IPR055269">
    <property type="entry name" value="Alpha-crystallin/HSP_16"/>
</dbReference>
<dbReference type="InterPro" id="IPR001436">
    <property type="entry name" value="Alpha-crystallin/sHSP_animal"/>
</dbReference>
<dbReference type="InterPro" id="IPR003090">
    <property type="entry name" value="Alpha-crystallin_N"/>
</dbReference>
<dbReference type="InterPro" id="IPR008978">
    <property type="entry name" value="HSP20-like_chaperone"/>
</dbReference>
<dbReference type="PANTHER" id="PTHR45640:SF5">
    <property type="entry name" value="ALPHA-CRYSTALLIN B CHAIN"/>
    <property type="match status" value="1"/>
</dbReference>
<dbReference type="PANTHER" id="PTHR45640">
    <property type="entry name" value="HEAT SHOCK PROTEIN HSP-12.2-RELATED"/>
    <property type="match status" value="1"/>
</dbReference>
<dbReference type="Pfam" id="PF00525">
    <property type="entry name" value="Crystallin"/>
    <property type="match status" value="1"/>
</dbReference>
<dbReference type="Pfam" id="PF00011">
    <property type="entry name" value="HSP20"/>
    <property type="match status" value="1"/>
</dbReference>
<dbReference type="PIRSF" id="PIRSF036514">
    <property type="entry name" value="Sm_HSP_B1"/>
    <property type="match status" value="1"/>
</dbReference>
<dbReference type="PRINTS" id="PR00299">
    <property type="entry name" value="ACRYSTALLIN"/>
</dbReference>
<dbReference type="SUPFAM" id="SSF49764">
    <property type="entry name" value="HSP20-like chaperones"/>
    <property type="match status" value="1"/>
</dbReference>
<dbReference type="PROSITE" id="PS01031">
    <property type="entry name" value="SHSP"/>
    <property type="match status" value="1"/>
</dbReference>
<organism>
    <name type="scientific">Sus scrofa</name>
    <name type="common">Pig</name>
    <dbReference type="NCBI Taxonomy" id="9823"/>
    <lineage>
        <taxon>Eukaryota</taxon>
        <taxon>Metazoa</taxon>
        <taxon>Chordata</taxon>
        <taxon>Craniata</taxon>
        <taxon>Vertebrata</taxon>
        <taxon>Euteleostomi</taxon>
        <taxon>Mammalia</taxon>
        <taxon>Eutheria</taxon>
        <taxon>Laurasiatheria</taxon>
        <taxon>Artiodactyla</taxon>
        <taxon>Suina</taxon>
        <taxon>Suidae</taxon>
        <taxon>Sus</taxon>
    </lineage>
</organism>
<protein>
    <recommendedName>
        <fullName>Alpha-crystallin B chain</fullName>
    </recommendedName>
    <alternativeName>
        <fullName>Alpha(B)-crystallin</fullName>
    </alternativeName>
</protein>